<proteinExistence type="evidence at protein level"/>
<gene>
    <name type="primary">HSP42</name>
    <name type="ordered locus">YDR171W</name>
    <name type="ORF">YD9395.04</name>
</gene>
<sequence length="375" mass="42817">MSFYQPSLSLYDVLNALSNQTGQRGQQGYPRQPQRPQRYHPHYGQVHVGGHHPRHHPLYSRYNGVPNTYYYQFPGQAYYYSPEYGYDDEDGEEEDQDEDMVGDSGTTRQEDGGEDSNSRRYPSYYHCNTARNNRTNQQANSLNDLLTALIGVPPYEGTEPEIEANTEQEGEKGEEKDKKDKSEAPKEEAGETNKEKPLNQLEESSRPPLAKKSSSFAHLQAPSPIPDPLQVSKPETRMDLPFSPEVNVYDTEDTYVVVLALPGANSRAFHIDYHPSSHEMLIKGKIEDRVGIDEKFLKITELKYGAFERTVKFPVLPRIKDEEIKATYNNGLLQIKVPKIVNDTEKPKPKKRIAIEEIPDEELEFEENPNPTVEN</sequence>
<keyword id="KW-0597">Phosphoprotein</keyword>
<keyword id="KW-1185">Reference proteome</keyword>
<keyword id="KW-0346">Stress response</keyword>
<dbReference type="EMBL" id="U41401">
    <property type="protein sequence ID" value="AAC49256.1"/>
    <property type="molecule type" value="Genomic_DNA"/>
</dbReference>
<dbReference type="EMBL" id="Z46727">
    <property type="protein sequence ID" value="CAA86676.1"/>
    <property type="molecule type" value="Genomic_DNA"/>
</dbReference>
<dbReference type="EMBL" id="AY558574">
    <property type="protein sequence ID" value="AAS56900.1"/>
    <property type="molecule type" value="Genomic_DNA"/>
</dbReference>
<dbReference type="EMBL" id="BK006938">
    <property type="protein sequence ID" value="DAA12013.1"/>
    <property type="molecule type" value="Genomic_DNA"/>
</dbReference>
<dbReference type="PIR" id="S49767">
    <property type="entry name" value="S49767"/>
</dbReference>
<dbReference type="RefSeq" id="NP_010456.1">
    <property type="nucleotide sequence ID" value="NM_001180478.1"/>
</dbReference>
<dbReference type="SMR" id="Q12329"/>
<dbReference type="BioGRID" id="32224">
    <property type="interactions" value="174"/>
</dbReference>
<dbReference type="DIP" id="DIP-2515N"/>
<dbReference type="FunCoup" id="Q12329">
    <property type="interactions" value="920"/>
</dbReference>
<dbReference type="IntAct" id="Q12329">
    <property type="interactions" value="121"/>
</dbReference>
<dbReference type="MINT" id="Q12329"/>
<dbReference type="STRING" id="4932.YDR171W"/>
<dbReference type="GlyGen" id="Q12329">
    <property type="glycosylation" value="2 sites, 1 O-linked glycan (2 sites)"/>
</dbReference>
<dbReference type="iPTMnet" id="Q12329"/>
<dbReference type="PaxDb" id="4932-YDR171W"/>
<dbReference type="PeptideAtlas" id="Q12329"/>
<dbReference type="EnsemblFungi" id="YDR171W_mRNA">
    <property type="protein sequence ID" value="YDR171W"/>
    <property type="gene ID" value="YDR171W"/>
</dbReference>
<dbReference type="GeneID" id="851751"/>
<dbReference type="KEGG" id="sce:YDR171W"/>
<dbReference type="AGR" id="SGD:S000002578"/>
<dbReference type="SGD" id="S000002578">
    <property type="gene designation" value="HSP42"/>
</dbReference>
<dbReference type="VEuPathDB" id="FungiDB:YDR171W"/>
<dbReference type="eggNOG" id="KOG0710">
    <property type="taxonomic scope" value="Eukaryota"/>
</dbReference>
<dbReference type="HOGENOM" id="CLU_057192_0_0_1"/>
<dbReference type="InParanoid" id="Q12329"/>
<dbReference type="OMA" id="YYYNPEY"/>
<dbReference type="OrthoDB" id="5511210at2759"/>
<dbReference type="BioCyc" id="YEAST:G3O-29760-MONOMER"/>
<dbReference type="BioGRID-ORCS" id="851751">
    <property type="hits" value="8 hits in 10 CRISPR screens"/>
</dbReference>
<dbReference type="CD-CODE" id="67785C55">
    <property type="entry name" value="Hypersomatic shock foci"/>
</dbReference>
<dbReference type="CD-CODE" id="E03F929F">
    <property type="entry name" value="Stress granule"/>
</dbReference>
<dbReference type="PRO" id="PR:Q12329"/>
<dbReference type="Proteomes" id="UP000002311">
    <property type="component" value="Chromosome IV"/>
</dbReference>
<dbReference type="RNAct" id="Q12329">
    <property type="molecule type" value="protein"/>
</dbReference>
<dbReference type="GO" id="GO:0005737">
    <property type="term" value="C:cytoplasm"/>
    <property type="evidence" value="ECO:0007005"/>
    <property type="project" value="SGD"/>
</dbReference>
<dbReference type="GO" id="GO:0140311">
    <property type="term" value="F:protein sequestering activity"/>
    <property type="evidence" value="ECO:0000315"/>
    <property type="project" value="SGD"/>
</dbReference>
<dbReference type="GO" id="GO:0051082">
    <property type="term" value="F:unfolded protein binding"/>
    <property type="evidence" value="ECO:0000250"/>
    <property type="project" value="SGD"/>
</dbReference>
<dbReference type="GO" id="GO:0007010">
    <property type="term" value="P:cytoskeleton organization"/>
    <property type="evidence" value="ECO:0000315"/>
    <property type="project" value="SGD"/>
</dbReference>
<dbReference type="GO" id="GO:0051259">
    <property type="term" value="P:protein complex oligomerization"/>
    <property type="evidence" value="ECO:0000318"/>
    <property type="project" value="GO_Central"/>
</dbReference>
<dbReference type="GO" id="GO:0006457">
    <property type="term" value="P:protein folding"/>
    <property type="evidence" value="ECO:0000318"/>
    <property type="project" value="GO_Central"/>
</dbReference>
<dbReference type="GO" id="GO:0009408">
    <property type="term" value="P:response to heat"/>
    <property type="evidence" value="ECO:0000318"/>
    <property type="project" value="GO_Central"/>
</dbReference>
<dbReference type="GO" id="GO:0042542">
    <property type="term" value="P:response to hydrogen peroxide"/>
    <property type="evidence" value="ECO:0000318"/>
    <property type="project" value="GO_Central"/>
</dbReference>
<dbReference type="GO" id="GO:0009651">
    <property type="term" value="P:response to salt stress"/>
    <property type="evidence" value="ECO:0000318"/>
    <property type="project" value="GO_Central"/>
</dbReference>
<dbReference type="CDD" id="cd06464">
    <property type="entry name" value="ACD_sHsps-like"/>
    <property type="match status" value="1"/>
</dbReference>
<dbReference type="FunFam" id="2.60.40.790:FF:000077">
    <property type="entry name" value="Heat shock protein"/>
    <property type="match status" value="1"/>
</dbReference>
<dbReference type="Gene3D" id="2.60.40.790">
    <property type="match status" value="1"/>
</dbReference>
<dbReference type="InterPro" id="IPR002068">
    <property type="entry name" value="A-crystallin/Hsp20_dom"/>
</dbReference>
<dbReference type="InterPro" id="IPR008978">
    <property type="entry name" value="HSP20-like_chaperone"/>
</dbReference>
<dbReference type="Pfam" id="PF00011">
    <property type="entry name" value="HSP20"/>
    <property type="match status" value="1"/>
</dbReference>
<dbReference type="SUPFAM" id="SSF49764">
    <property type="entry name" value="HSP20-like chaperones"/>
    <property type="match status" value="1"/>
</dbReference>
<dbReference type="PROSITE" id="PS01031">
    <property type="entry name" value="SHSP"/>
    <property type="match status" value="1"/>
</dbReference>
<name>HSP42_YEAST</name>
<comment type="subunit">
    <text>Forms oligomeric complexes. Interacts with itself.</text>
</comment>
<comment type="interaction">
    <interactant intactId="EBI-8571">
        <id>Q12329</id>
    </interactant>
    <interactant intactId="EBI-4192">
        <id>Q00684</id>
        <label>CDC14</label>
    </interactant>
    <organismsDiffer>false</organismsDiffer>
    <experiments>2</experiments>
</comment>
<comment type="induction">
    <text>By stress such as heat shock or increased salt concentration. Up-regulated by all stress conditions tested. Also expressed in unstressed cells.</text>
</comment>
<comment type="miscellaneous">
    <text evidence="3">Present with 1470 molecules/cell in log phase SD medium.</text>
</comment>
<comment type="similarity">
    <text evidence="1">Belongs to the small heat shock protein (HSP20) family.</text>
</comment>
<feature type="chain" id="PRO_0000126005" description="Heat shock protein 42">
    <location>
        <begin position="1"/>
        <end position="375"/>
    </location>
</feature>
<feature type="domain" description="sHSP" evidence="1">
    <location>
        <begin position="237"/>
        <end position="356"/>
    </location>
</feature>
<feature type="region of interest" description="Disordered" evidence="2">
    <location>
        <begin position="21"/>
        <end position="59"/>
    </location>
</feature>
<feature type="region of interest" description="Disordered" evidence="2">
    <location>
        <begin position="81"/>
        <end position="127"/>
    </location>
</feature>
<feature type="region of interest" description="Disordered" evidence="2">
    <location>
        <begin position="154"/>
        <end position="238"/>
    </location>
</feature>
<feature type="region of interest" description="Disordered" evidence="2">
    <location>
        <begin position="347"/>
        <end position="375"/>
    </location>
</feature>
<feature type="compositionally biased region" description="Low complexity" evidence="2">
    <location>
        <begin position="22"/>
        <end position="48"/>
    </location>
</feature>
<feature type="compositionally biased region" description="Basic residues" evidence="2">
    <location>
        <begin position="49"/>
        <end position="58"/>
    </location>
</feature>
<feature type="compositionally biased region" description="Acidic residues" evidence="2">
    <location>
        <begin position="85"/>
        <end position="101"/>
    </location>
</feature>
<feature type="compositionally biased region" description="Acidic residues" evidence="2">
    <location>
        <begin position="158"/>
        <end position="168"/>
    </location>
</feature>
<feature type="compositionally biased region" description="Basic and acidic residues" evidence="2">
    <location>
        <begin position="169"/>
        <end position="197"/>
    </location>
</feature>
<feature type="compositionally biased region" description="Acidic residues" evidence="2">
    <location>
        <begin position="357"/>
        <end position="367"/>
    </location>
</feature>
<feature type="modified residue" description="Phosphoserine" evidence="4">
    <location>
        <position position="182"/>
    </location>
</feature>
<feature type="modified residue" description="Phosphoserine" evidence="5">
    <location>
        <position position="213"/>
    </location>
</feature>
<feature type="modified residue" description="Phosphoserine" evidence="5">
    <location>
        <position position="214"/>
    </location>
</feature>
<feature type="modified residue" description="Phosphoserine" evidence="5">
    <location>
        <position position="215"/>
    </location>
</feature>
<feature type="modified residue" description="Phosphoserine" evidence="4 5">
    <location>
        <position position="223"/>
    </location>
</feature>
<reference key="1">
    <citation type="journal article" date="1996" name="J. Biol. Chem.">
        <title>Multimerization of Hsp42p, a novel heat shock protein of Saccharomyces cerevisiae, is dependent on a conserved carboxyl-terminal sequence.</title>
        <authorList>
            <person name="Wotton D."/>
            <person name="Freeman K."/>
            <person name="Shore D."/>
        </authorList>
    </citation>
    <scope>NUCLEOTIDE SEQUENCE [GENOMIC DNA]</scope>
    <source>
        <strain>ATCC 200060 / W303</strain>
    </source>
</reference>
<reference key="2">
    <citation type="journal article" date="1997" name="Nature">
        <title>The nucleotide sequence of Saccharomyces cerevisiae chromosome IV.</title>
        <authorList>
            <person name="Jacq C."/>
            <person name="Alt-Moerbe J."/>
            <person name="Andre B."/>
            <person name="Arnold W."/>
            <person name="Bahr A."/>
            <person name="Ballesta J.P.G."/>
            <person name="Bargues M."/>
            <person name="Baron L."/>
            <person name="Becker A."/>
            <person name="Biteau N."/>
            <person name="Bloecker H."/>
            <person name="Blugeon C."/>
            <person name="Boskovic J."/>
            <person name="Brandt P."/>
            <person name="Brueckner M."/>
            <person name="Buitrago M.J."/>
            <person name="Coster F."/>
            <person name="Delaveau T."/>
            <person name="del Rey F."/>
            <person name="Dujon B."/>
            <person name="Eide L.G."/>
            <person name="Garcia-Cantalejo J.M."/>
            <person name="Goffeau A."/>
            <person name="Gomez-Peris A."/>
            <person name="Granotier C."/>
            <person name="Hanemann V."/>
            <person name="Hankeln T."/>
            <person name="Hoheisel J.D."/>
            <person name="Jaeger W."/>
            <person name="Jimenez A."/>
            <person name="Jonniaux J.-L."/>
            <person name="Kraemer C."/>
            <person name="Kuester H."/>
            <person name="Laamanen P."/>
            <person name="Legros Y."/>
            <person name="Louis E.J."/>
            <person name="Moeller-Rieker S."/>
            <person name="Monnet A."/>
            <person name="Moro M."/>
            <person name="Mueller-Auer S."/>
            <person name="Nussbaumer B."/>
            <person name="Paricio N."/>
            <person name="Paulin L."/>
            <person name="Perea J."/>
            <person name="Perez-Alonso M."/>
            <person name="Perez-Ortin J.E."/>
            <person name="Pohl T.M."/>
            <person name="Prydz H."/>
            <person name="Purnelle B."/>
            <person name="Rasmussen S.W."/>
            <person name="Remacha M.A."/>
            <person name="Revuelta J.L."/>
            <person name="Rieger M."/>
            <person name="Salom D."/>
            <person name="Saluz H.P."/>
            <person name="Saiz J.E."/>
            <person name="Saren A.-M."/>
            <person name="Schaefer M."/>
            <person name="Scharfe M."/>
            <person name="Schmidt E.R."/>
            <person name="Schneider C."/>
            <person name="Scholler P."/>
            <person name="Schwarz S."/>
            <person name="Soler-Mira A."/>
            <person name="Urrestarazu L.A."/>
            <person name="Verhasselt P."/>
            <person name="Vissers S."/>
            <person name="Voet M."/>
            <person name="Volckaert G."/>
            <person name="Wagner G."/>
            <person name="Wambutt R."/>
            <person name="Wedler E."/>
            <person name="Wedler H."/>
            <person name="Woelfl S."/>
            <person name="Harris D.E."/>
            <person name="Bowman S."/>
            <person name="Brown D."/>
            <person name="Churcher C.M."/>
            <person name="Connor R."/>
            <person name="Dedman K."/>
            <person name="Gentles S."/>
            <person name="Hamlin N."/>
            <person name="Hunt S."/>
            <person name="Jones L."/>
            <person name="McDonald S."/>
            <person name="Murphy L.D."/>
            <person name="Niblett D."/>
            <person name="Odell C."/>
            <person name="Oliver K."/>
            <person name="Rajandream M.A."/>
            <person name="Richards C."/>
            <person name="Shore L."/>
            <person name="Walsh S.V."/>
            <person name="Barrell B.G."/>
            <person name="Dietrich F.S."/>
            <person name="Mulligan J.T."/>
            <person name="Allen E."/>
            <person name="Araujo R."/>
            <person name="Aviles E."/>
            <person name="Berno A."/>
            <person name="Carpenter J."/>
            <person name="Chen E."/>
            <person name="Cherry J.M."/>
            <person name="Chung E."/>
            <person name="Duncan M."/>
            <person name="Hunicke-Smith S."/>
            <person name="Hyman R.W."/>
            <person name="Komp C."/>
            <person name="Lashkari D."/>
            <person name="Lew H."/>
            <person name="Lin D."/>
            <person name="Mosedale D."/>
            <person name="Nakahara K."/>
            <person name="Namath A."/>
            <person name="Oefner P."/>
            <person name="Oh C."/>
            <person name="Petel F.X."/>
            <person name="Roberts D."/>
            <person name="Schramm S."/>
            <person name="Schroeder M."/>
            <person name="Shogren T."/>
            <person name="Shroff N."/>
            <person name="Winant A."/>
            <person name="Yelton M.A."/>
            <person name="Botstein D."/>
            <person name="Davis R.W."/>
            <person name="Johnston M."/>
            <person name="Andrews S."/>
            <person name="Brinkman R."/>
            <person name="Cooper J."/>
            <person name="Ding H."/>
            <person name="Du Z."/>
            <person name="Favello A."/>
            <person name="Fulton L."/>
            <person name="Gattung S."/>
            <person name="Greco T."/>
            <person name="Hallsworth K."/>
            <person name="Hawkins J."/>
            <person name="Hillier L.W."/>
            <person name="Jier M."/>
            <person name="Johnson D."/>
            <person name="Johnston L."/>
            <person name="Kirsten J."/>
            <person name="Kucaba T."/>
            <person name="Langston Y."/>
            <person name="Latreille P."/>
            <person name="Le T."/>
            <person name="Mardis E."/>
            <person name="Menezes S."/>
            <person name="Miller N."/>
            <person name="Nhan M."/>
            <person name="Pauley A."/>
            <person name="Peluso D."/>
            <person name="Rifkin L."/>
            <person name="Riles L."/>
            <person name="Taich A."/>
            <person name="Trevaskis E."/>
            <person name="Vignati D."/>
            <person name="Wilcox L."/>
            <person name="Wohldman P."/>
            <person name="Vaudin M."/>
            <person name="Wilson R."/>
            <person name="Waterston R."/>
            <person name="Albermann K."/>
            <person name="Hani J."/>
            <person name="Heumann K."/>
            <person name="Kleine K."/>
            <person name="Mewes H.-W."/>
            <person name="Zollner A."/>
            <person name="Zaccaria P."/>
        </authorList>
    </citation>
    <scope>NUCLEOTIDE SEQUENCE [LARGE SCALE GENOMIC DNA]</scope>
    <source>
        <strain>ATCC 204508 / S288c</strain>
    </source>
</reference>
<reference key="3">
    <citation type="journal article" date="2014" name="G3 (Bethesda)">
        <title>The reference genome sequence of Saccharomyces cerevisiae: Then and now.</title>
        <authorList>
            <person name="Engel S.R."/>
            <person name="Dietrich F.S."/>
            <person name="Fisk D.G."/>
            <person name="Binkley G."/>
            <person name="Balakrishnan R."/>
            <person name="Costanzo M.C."/>
            <person name="Dwight S.S."/>
            <person name="Hitz B.C."/>
            <person name="Karra K."/>
            <person name="Nash R.S."/>
            <person name="Weng S."/>
            <person name="Wong E.D."/>
            <person name="Lloyd P."/>
            <person name="Skrzypek M.S."/>
            <person name="Miyasato S.R."/>
            <person name="Simison M."/>
            <person name="Cherry J.M."/>
        </authorList>
    </citation>
    <scope>GENOME REANNOTATION</scope>
    <source>
        <strain>ATCC 204508 / S288c</strain>
    </source>
</reference>
<reference key="4">
    <citation type="journal article" date="2007" name="Genome Res.">
        <title>Approaching a complete repository of sequence-verified protein-encoding clones for Saccharomyces cerevisiae.</title>
        <authorList>
            <person name="Hu Y."/>
            <person name="Rolfs A."/>
            <person name="Bhullar B."/>
            <person name="Murthy T.V.S."/>
            <person name="Zhu C."/>
            <person name="Berger M.F."/>
            <person name="Camargo A.A."/>
            <person name="Kelley F."/>
            <person name="McCarron S."/>
            <person name="Jepson D."/>
            <person name="Richardson A."/>
            <person name="Raphael J."/>
            <person name="Moreira D."/>
            <person name="Taycher E."/>
            <person name="Zuo D."/>
            <person name="Mohr S."/>
            <person name="Kane M.F."/>
            <person name="Williamson J."/>
            <person name="Simpson A.J.G."/>
            <person name="Bulyk M.L."/>
            <person name="Harlow E."/>
            <person name="Marsischky G."/>
            <person name="Kolodner R.D."/>
            <person name="LaBaer J."/>
        </authorList>
    </citation>
    <scope>NUCLEOTIDE SEQUENCE [GENOMIC DNA]</scope>
    <source>
        <strain>ATCC 204508 / S288c</strain>
    </source>
</reference>
<reference key="5">
    <citation type="journal article" date="2003" name="Nature">
        <title>Global analysis of protein expression in yeast.</title>
        <authorList>
            <person name="Ghaemmaghami S."/>
            <person name="Huh W.-K."/>
            <person name="Bower K."/>
            <person name="Howson R.W."/>
            <person name="Belle A."/>
            <person name="Dephoure N."/>
            <person name="O'Shea E.K."/>
            <person name="Weissman J.S."/>
        </authorList>
    </citation>
    <scope>LEVEL OF PROTEIN EXPRESSION [LARGE SCALE ANALYSIS]</scope>
</reference>
<reference key="6">
    <citation type="journal article" date="2005" name="Mol. Cell. Proteomics">
        <title>Quantitative phosphoproteomics applied to the yeast pheromone signaling pathway.</title>
        <authorList>
            <person name="Gruhler A."/>
            <person name="Olsen J.V."/>
            <person name="Mohammed S."/>
            <person name="Mortensen P."/>
            <person name="Faergeman N.J."/>
            <person name="Mann M."/>
            <person name="Jensen O.N."/>
        </authorList>
    </citation>
    <scope>IDENTIFICATION BY MASS SPECTROMETRY [LARGE SCALE ANALYSIS]</scope>
    <source>
        <strain>YAL6B</strain>
    </source>
</reference>
<reference key="7">
    <citation type="journal article" date="2007" name="J. Proteome Res.">
        <title>Large-scale phosphorylation analysis of alpha-factor-arrested Saccharomyces cerevisiae.</title>
        <authorList>
            <person name="Li X."/>
            <person name="Gerber S.A."/>
            <person name="Rudner A.D."/>
            <person name="Beausoleil S.A."/>
            <person name="Haas W."/>
            <person name="Villen J."/>
            <person name="Elias J.E."/>
            <person name="Gygi S.P."/>
        </authorList>
    </citation>
    <scope>IDENTIFICATION BY MASS SPECTROMETRY [LARGE SCALE ANALYSIS]</scope>
    <source>
        <strain>ADR376</strain>
    </source>
</reference>
<reference key="8">
    <citation type="journal article" date="2008" name="Mol. Cell. Proteomics">
        <title>A multidimensional chromatography technology for in-depth phosphoproteome analysis.</title>
        <authorList>
            <person name="Albuquerque C.P."/>
            <person name="Smolka M.B."/>
            <person name="Payne S.H."/>
            <person name="Bafna V."/>
            <person name="Eng J."/>
            <person name="Zhou H."/>
        </authorList>
    </citation>
    <scope>PHOSPHORYLATION [LARGE SCALE ANALYSIS] AT SER-182 AND SER-223</scope>
    <scope>IDENTIFICATION BY MASS SPECTROMETRY [LARGE SCALE ANALYSIS]</scope>
</reference>
<reference key="9">
    <citation type="journal article" date="2009" name="Science">
        <title>Global analysis of Cdk1 substrate phosphorylation sites provides insights into evolution.</title>
        <authorList>
            <person name="Holt L.J."/>
            <person name="Tuch B.B."/>
            <person name="Villen J."/>
            <person name="Johnson A.D."/>
            <person name="Gygi S.P."/>
            <person name="Morgan D.O."/>
        </authorList>
    </citation>
    <scope>PHOSPHORYLATION [LARGE SCALE ANALYSIS] AT SER-213; SER-214; SER-215 AND SER-223</scope>
    <scope>IDENTIFICATION BY MASS SPECTROMETRY [LARGE SCALE ANALYSIS]</scope>
</reference>
<accession>Q12329</accession>
<accession>D6VSF3</accession>
<evidence type="ECO:0000255" key="1">
    <source>
        <dbReference type="PROSITE-ProRule" id="PRU00285"/>
    </source>
</evidence>
<evidence type="ECO:0000256" key="2">
    <source>
        <dbReference type="SAM" id="MobiDB-lite"/>
    </source>
</evidence>
<evidence type="ECO:0000269" key="3">
    <source>
    </source>
</evidence>
<evidence type="ECO:0007744" key="4">
    <source>
    </source>
</evidence>
<evidence type="ECO:0007744" key="5">
    <source>
    </source>
</evidence>
<protein>
    <recommendedName>
        <fullName>Heat shock protein 42</fullName>
    </recommendedName>
    <alternativeName>
        <fullName>42 kDa heat shock protein</fullName>
    </alternativeName>
</protein>
<organism>
    <name type="scientific">Saccharomyces cerevisiae (strain ATCC 204508 / S288c)</name>
    <name type="common">Baker's yeast</name>
    <dbReference type="NCBI Taxonomy" id="559292"/>
    <lineage>
        <taxon>Eukaryota</taxon>
        <taxon>Fungi</taxon>
        <taxon>Dikarya</taxon>
        <taxon>Ascomycota</taxon>
        <taxon>Saccharomycotina</taxon>
        <taxon>Saccharomycetes</taxon>
        <taxon>Saccharomycetales</taxon>
        <taxon>Saccharomycetaceae</taxon>
        <taxon>Saccharomyces</taxon>
    </lineage>
</organism>